<name>TVB9_HUMAN</name>
<feature type="signal peptide" evidence="1">
    <location>
        <begin position="1"/>
        <end position="21"/>
    </location>
</feature>
<feature type="chain" id="PRO_5002092594" description="T cell receptor beta variable 9" evidence="1">
    <location>
        <begin position="22"/>
        <end position="114"/>
    </location>
</feature>
<feature type="domain" description="Ig-like" evidence="2">
    <location>
        <begin position="22"/>
        <end position="114" status="greater than"/>
    </location>
</feature>
<feature type="glycosylation site" description="N-linked (GlcNAc...) asparagine" evidence="1">
    <location>
        <position position="96"/>
    </location>
</feature>
<feature type="disulfide bond" evidence="2">
    <location>
        <begin position="42"/>
        <end position="110"/>
    </location>
</feature>
<feature type="non-terminal residue">
    <location>
        <position position="114"/>
    </location>
</feature>
<feature type="strand" evidence="10">
    <location>
        <begin position="24"/>
        <end position="26"/>
    </location>
</feature>
<feature type="strand" evidence="10">
    <location>
        <begin position="28"/>
        <end position="33"/>
    </location>
</feature>
<feature type="strand" evidence="10">
    <location>
        <begin position="38"/>
        <end position="43"/>
    </location>
</feature>
<feature type="strand" evidence="10">
    <location>
        <begin position="50"/>
        <end position="56"/>
    </location>
</feature>
<feature type="strand" evidence="10">
    <location>
        <begin position="63"/>
        <end position="69"/>
    </location>
</feature>
<feature type="strand" evidence="10">
    <location>
        <begin position="72"/>
        <end position="76"/>
    </location>
</feature>
<feature type="strand" evidence="10">
    <location>
        <begin position="83"/>
        <end position="87"/>
    </location>
</feature>
<feature type="strand" evidence="10">
    <location>
        <begin position="93"/>
        <end position="97"/>
    </location>
</feature>
<feature type="helix" evidence="10">
    <location>
        <begin position="102"/>
        <end position="104"/>
    </location>
</feature>
<feature type="strand" evidence="10">
    <location>
        <begin position="106"/>
        <end position="114"/>
    </location>
</feature>
<protein>
    <recommendedName>
        <fullName evidence="8">T cell receptor beta variable 9</fullName>
    </recommendedName>
</protein>
<accession>A0A0B4J1U6</accession>
<evidence type="ECO:0000255" key="1"/>
<evidence type="ECO:0000255" key="2">
    <source>
        <dbReference type="PROSITE-ProRule" id="PRU00114"/>
    </source>
</evidence>
<evidence type="ECO:0000303" key="3">
    <source>
    </source>
</evidence>
<evidence type="ECO:0000303" key="4">
    <source>
    </source>
</evidence>
<evidence type="ECO:0000303" key="5">
    <source>
    </source>
</evidence>
<evidence type="ECO:0000303" key="6">
    <source>
    </source>
</evidence>
<evidence type="ECO:0000303" key="7">
    <source>
    </source>
</evidence>
<evidence type="ECO:0000303" key="8">
    <source ref="2"/>
</evidence>
<evidence type="ECO:0000305" key="9"/>
<evidence type="ECO:0007829" key="10">
    <source>
        <dbReference type="PDB" id="6AVG"/>
    </source>
</evidence>
<proteinExistence type="evidence at protein level"/>
<organism>
    <name type="scientific">Homo sapiens</name>
    <name type="common">Human</name>
    <dbReference type="NCBI Taxonomy" id="9606"/>
    <lineage>
        <taxon>Eukaryota</taxon>
        <taxon>Metazoa</taxon>
        <taxon>Chordata</taxon>
        <taxon>Craniata</taxon>
        <taxon>Vertebrata</taxon>
        <taxon>Euteleostomi</taxon>
        <taxon>Mammalia</taxon>
        <taxon>Eutheria</taxon>
        <taxon>Euarchontoglires</taxon>
        <taxon>Primates</taxon>
        <taxon>Haplorrhini</taxon>
        <taxon>Catarrhini</taxon>
        <taxon>Hominidae</taxon>
        <taxon>Homo</taxon>
    </lineage>
</organism>
<gene>
    <name evidence="8" type="primary">TRBV9</name>
</gene>
<sequence>MGFRLLCCVAFCLLGAGPVDSGVTQTPKHLITATGQRVTLRCSPRSGDLSVYWYQQSLDQGLQFLIHYYNGEERAKGNILERFSAQQFPDLHSELNLSSLELGDSALYFCASSV</sequence>
<reference key="1">
    <citation type="journal article" date="2003" name="Nature">
        <title>The DNA sequence of human chromosome 7.</title>
        <authorList>
            <person name="Hillier L.W."/>
            <person name="Fulton R.S."/>
            <person name="Fulton L.A."/>
            <person name="Graves T.A."/>
            <person name="Pepin K.H."/>
            <person name="Wagner-McPherson C."/>
            <person name="Layman D."/>
            <person name="Maas J."/>
            <person name="Jaeger S."/>
            <person name="Walker R."/>
            <person name="Wylie K."/>
            <person name="Sekhon M."/>
            <person name="Becker M.C."/>
            <person name="O'Laughlin M.D."/>
            <person name="Schaller M.E."/>
            <person name="Fewell G.A."/>
            <person name="Delehaunty K.D."/>
            <person name="Miner T.L."/>
            <person name="Nash W.E."/>
            <person name="Cordes M."/>
            <person name="Du H."/>
            <person name="Sun H."/>
            <person name="Edwards J."/>
            <person name="Bradshaw-Cordum H."/>
            <person name="Ali J."/>
            <person name="Andrews S."/>
            <person name="Isak A."/>
            <person name="Vanbrunt A."/>
            <person name="Nguyen C."/>
            <person name="Du F."/>
            <person name="Lamar B."/>
            <person name="Courtney L."/>
            <person name="Kalicki J."/>
            <person name="Ozersky P."/>
            <person name="Bielicki L."/>
            <person name="Scott K."/>
            <person name="Holmes A."/>
            <person name="Harkins R."/>
            <person name="Harris A."/>
            <person name="Strong C.M."/>
            <person name="Hou S."/>
            <person name="Tomlinson C."/>
            <person name="Dauphin-Kohlberg S."/>
            <person name="Kozlowicz-Reilly A."/>
            <person name="Leonard S."/>
            <person name="Rohlfing T."/>
            <person name="Rock S.M."/>
            <person name="Tin-Wollam A.-M."/>
            <person name="Abbott A."/>
            <person name="Minx P."/>
            <person name="Maupin R."/>
            <person name="Strowmatt C."/>
            <person name="Latreille P."/>
            <person name="Miller N."/>
            <person name="Johnson D."/>
            <person name="Murray J."/>
            <person name="Woessner J.P."/>
            <person name="Wendl M.C."/>
            <person name="Yang S.-P."/>
            <person name="Schultz B.R."/>
            <person name="Wallis J.W."/>
            <person name="Spieth J."/>
            <person name="Bieri T.A."/>
            <person name="Nelson J.O."/>
            <person name="Berkowicz N."/>
            <person name="Wohldmann P.E."/>
            <person name="Cook L.L."/>
            <person name="Hickenbotham M.T."/>
            <person name="Eldred J."/>
            <person name="Williams D."/>
            <person name="Bedell J.A."/>
            <person name="Mardis E.R."/>
            <person name="Clifton S.W."/>
            <person name="Chissoe S.L."/>
            <person name="Marra M.A."/>
            <person name="Raymond C."/>
            <person name="Haugen E."/>
            <person name="Gillett W."/>
            <person name="Zhou Y."/>
            <person name="James R."/>
            <person name="Phelps K."/>
            <person name="Iadanoto S."/>
            <person name="Bubb K."/>
            <person name="Simms E."/>
            <person name="Levy R."/>
            <person name="Clendenning J."/>
            <person name="Kaul R."/>
            <person name="Kent W.J."/>
            <person name="Furey T.S."/>
            <person name="Baertsch R.A."/>
            <person name="Brent M.R."/>
            <person name="Keibler E."/>
            <person name="Flicek P."/>
            <person name="Bork P."/>
            <person name="Suyama M."/>
            <person name="Bailey J.A."/>
            <person name="Portnoy M.E."/>
            <person name="Torrents D."/>
            <person name="Chinwalla A.T."/>
            <person name="Gish W.R."/>
            <person name="Eddy S.R."/>
            <person name="McPherson J.D."/>
            <person name="Olson M.V."/>
            <person name="Eichler E.E."/>
            <person name="Green E.D."/>
            <person name="Waterston R.H."/>
            <person name="Wilson R.K."/>
        </authorList>
    </citation>
    <scope>NUCLEOTIDE SEQUENCE [LARGE SCALE GENOMIC DNA] (IMGT ALLELE TRBV9*02)</scope>
</reference>
<reference key="2">
    <citation type="book" date="2001" name="The T Cell Receptor FactsBook.">
        <title>The T Cell Receptor FactsBook.</title>
        <editorList>
            <person name="Lefranc M.P."/>
            <person name="Lefranc G."/>
        </editorList>
        <authorList>
            <person name="Lefranc M.P."/>
            <person name="Lefranc G."/>
        </authorList>
    </citation>
    <scope>NOMENCLATURE</scope>
</reference>
<reference key="3">
    <citation type="journal article" date="2004" name="Nat. Rev. Immunol.">
        <title>The many important facets of T-cell repertoire diversity.</title>
        <authorList>
            <person name="Nikolich-Zugich J."/>
            <person name="Slifka M.K."/>
            <person name="Messaoudi I."/>
        </authorList>
    </citation>
    <scope>REVIEW ON T CELL REPERTOIRE DIVERSITY</scope>
</reference>
<reference key="4">
    <citation type="journal article" date="2010" name="Cold Spring Harb. Perspect. Biol.">
        <title>Structural biology of the T-cell receptor: insights into receptor assembly, ligand recognition, and initiation of signaling.</title>
        <authorList>
            <person name="Wucherpfennig K.W."/>
            <person name="Gagnon E."/>
            <person name="Call M.J."/>
            <person name="Huseby E.S."/>
            <person name="Call M.E."/>
        </authorList>
    </citation>
    <scope>REVIEW ON T CELL RECEPTOR-CD3 COMPLEX ASSEMBLY</scope>
    <scope>SUBCELLULAR LOCATION</scope>
</reference>
<reference key="5">
    <citation type="journal article" date="2013" name="Nat. Rev. Immunol.">
        <title>T cell receptor signalling networks: branched, diversified and bounded.</title>
        <authorList>
            <person name="Brownlie R.J."/>
            <person name="Zamoyska R."/>
        </authorList>
    </citation>
    <scope>REVIEW ON T CELL RECEPTOR SIGNALING</scope>
</reference>
<reference key="6">
    <citation type="journal article" date="2014" name="Front. Immunol.">
        <title>Immunoglobulin and T Cell Receptor Genes: IMGT((R)) and the Birth and Rise of Immunoinformatics.</title>
        <authorList>
            <person name="Lefranc M.P."/>
        </authorList>
    </citation>
    <scope>NOMENCLATURE</scope>
</reference>
<reference key="7">
    <citation type="journal article" date="2015" name="Annu. Rev. Immunol.">
        <title>T cell antigen receptor recognition of antigen-presenting molecules.</title>
        <authorList>
            <person name="Rossjohn J."/>
            <person name="Gras S."/>
            <person name="Miles J.J."/>
            <person name="Turner S.J."/>
            <person name="Godfrey D.I."/>
            <person name="McCluskey J."/>
        </authorList>
    </citation>
    <scope>REVIEW ON FUNCTION</scope>
</reference>
<dbReference type="EMBL" id="AC245088">
    <property type="status" value="NOT_ANNOTATED_CDS"/>
    <property type="molecule type" value="Genomic_DNA"/>
</dbReference>
<dbReference type="PDB" id="6AVG">
    <property type="method" value="X-ray"/>
    <property type="resolution" value="2.60 A"/>
    <property type="chains" value="D/E=19-114"/>
</dbReference>
<dbReference type="PDBsum" id="6AVG"/>
<dbReference type="SMR" id="A0A0B4J1U6"/>
<dbReference type="FunCoup" id="A0A0B4J1U6">
    <property type="interactions" value="516"/>
</dbReference>
<dbReference type="IMGT_GENE-DB" id="TRBV9"/>
<dbReference type="GlyCosmos" id="A0A0B4J1U6">
    <property type="glycosylation" value="1 site, No reported glycans"/>
</dbReference>
<dbReference type="GlyGen" id="A0A0B4J1U6">
    <property type="glycosylation" value="1 site"/>
</dbReference>
<dbReference type="BioMuta" id="TRBV9"/>
<dbReference type="Ensembl" id="ENST00000390363.2">
    <property type="protein sequence ID" value="ENSP00000374886.2"/>
    <property type="gene ID" value="ENSG00000211716.2"/>
</dbReference>
<dbReference type="AGR" id="HGNC:12246"/>
<dbReference type="GeneCards" id="TRBV9"/>
<dbReference type="HGNC" id="HGNC:12246">
    <property type="gene designation" value="TRBV9"/>
</dbReference>
<dbReference type="HPA" id="ENSG00000211716">
    <property type="expression patterns" value="Tissue enhanced (lymphoid tissue, testis)"/>
</dbReference>
<dbReference type="neXtProt" id="NX_A0A0B4J1U6"/>
<dbReference type="VEuPathDB" id="HostDB:ENSG00000211716"/>
<dbReference type="GeneTree" id="ENSGT00940000154270"/>
<dbReference type="HOGENOM" id="CLU_077975_9_4_1"/>
<dbReference type="InParanoid" id="A0A0B4J1U6"/>
<dbReference type="OMA" id="DCGVTQT"/>
<dbReference type="OrthoDB" id="9803478at2759"/>
<dbReference type="PAN-GO" id="A0A0B4J1U6">
    <property type="GO annotations" value="2 GO annotations based on evolutionary models"/>
</dbReference>
<dbReference type="SignaLink" id="A0A0B4J1U6"/>
<dbReference type="ChiTaRS" id="TRBV9">
    <property type="organism name" value="human"/>
</dbReference>
<dbReference type="Pharos" id="A0A0B4J1U6">
    <property type="development level" value="Tdark"/>
</dbReference>
<dbReference type="PRO" id="PR:A0A0B4J1U6"/>
<dbReference type="Proteomes" id="UP000005640">
    <property type="component" value="Chromosome 7"/>
</dbReference>
<dbReference type="RNAct" id="A0A0B4J1U6">
    <property type="molecule type" value="protein"/>
</dbReference>
<dbReference type="Bgee" id="ENSG00000211716">
    <property type="expression patterns" value="Expressed in lymph node and 84 other cell types or tissues"/>
</dbReference>
<dbReference type="GO" id="GO:0005886">
    <property type="term" value="C:plasma membrane"/>
    <property type="evidence" value="ECO:0000318"/>
    <property type="project" value="GO_Central"/>
</dbReference>
<dbReference type="GO" id="GO:0042101">
    <property type="term" value="C:T cell receptor complex"/>
    <property type="evidence" value="ECO:0007669"/>
    <property type="project" value="UniProtKB-KW"/>
</dbReference>
<dbReference type="GO" id="GO:0002250">
    <property type="term" value="P:adaptive immune response"/>
    <property type="evidence" value="ECO:0007669"/>
    <property type="project" value="UniProtKB-KW"/>
</dbReference>
<dbReference type="GO" id="GO:0007166">
    <property type="term" value="P:cell surface receptor signaling pathway"/>
    <property type="evidence" value="ECO:0000318"/>
    <property type="project" value="GO_Central"/>
</dbReference>
<dbReference type="Gene3D" id="2.60.40.10">
    <property type="entry name" value="Immunoglobulins"/>
    <property type="match status" value="1"/>
</dbReference>
<dbReference type="InterPro" id="IPR007110">
    <property type="entry name" value="Ig-like_dom"/>
</dbReference>
<dbReference type="InterPro" id="IPR036179">
    <property type="entry name" value="Ig-like_dom_sf"/>
</dbReference>
<dbReference type="InterPro" id="IPR013783">
    <property type="entry name" value="Ig-like_fold"/>
</dbReference>
<dbReference type="InterPro" id="IPR013106">
    <property type="entry name" value="Ig_V-set"/>
</dbReference>
<dbReference type="InterPro" id="IPR050413">
    <property type="entry name" value="TCR_beta_variable"/>
</dbReference>
<dbReference type="PANTHER" id="PTHR23268:SF101">
    <property type="entry name" value="T CELL RECEPTOR BETA VARIABLE 9"/>
    <property type="match status" value="1"/>
</dbReference>
<dbReference type="PANTHER" id="PTHR23268">
    <property type="entry name" value="T-CELL RECEPTOR BETA CHAIN"/>
    <property type="match status" value="1"/>
</dbReference>
<dbReference type="Pfam" id="PF07686">
    <property type="entry name" value="V-set"/>
    <property type="match status" value="1"/>
</dbReference>
<dbReference type="SUPFAM" id="SSF48726">
    <property type="entry name" value="Immunoglobulin"/>
    <property type="match status" value="1"/>
</dbReference>
<dbReference type="PROSITE" id="PS50835">
    <property type="entry name" value="IG_LIKE"/>
    <property type="match status" value="1"/>
</dbReference>
<keyword id="KW-0002">3D-structure</keyword>
<keyword id="KW-1064">Adaptive immunity</keyword>
<keyword id="KW-1003">Cell membrane</keyword>
<keyword id="KW-1015">Disulfide bond</keyword>
<keyword id="KW-0325">Glycoprotein</keyword>
<keyword id="KW-0391">Immunity</keyword>
<keyword id="KW-0393">Immunoglobulin domain</keyword>
<keyword id="KW-0472">Membrane</keyword>
<keyword id="KW-0675">Receptor</keyword>
<keyword id="KW-1185">Reference proteome</keyword>
<keyword id="KW-0732">Signal</keyword>
<keyword id="KW-1279">T cell receptor</keyword>
<comment type="function">
    <text evidence="3 5 6 7">V region of the variable domain of T cell receptor (TR) beta chain that participates in the antigen recognition (PubMed:24600447). Alpha-beta T cell receptors are antigen specific receptors which are essential to the immune response and are present on the cell surface of T lymphocytes. Recognize peptide-major histocompatibility (MH) (pMH) complexes that are displayed by antigen presenting cells (APC), a prerequisite for efficient T cell adaptive immunity against pathogens (PubMed:25493333). Binding of alpha-beta TR to pMH complex initiates TR-CD3 clustering on the cell surface and intracellular activation of LCK that phosphorylates the ITAM motifs of CD3G, CD3D, CD3E and CD247 enabling the recruitment of ZAP70. In turn ZAP70 phosphorylates LAT, which recruits numerous signaling molecules to form the LAT signalosome. The LAT signalosome propagates signal branching to three major signaling pathways, the calcium, the mitogen-activated protein kinase (MAPK) kinase and the nuclear factor NF-kappa-B (NF-kB) pathways, leading to the mobilization of transcription factors that are critical for gene expression and essential for T cell growth and differentiation (PubMed:23524462). The T cell repertoire is generated in the thymus, by V-(D)-J rearrangement. This repertoire is then shaped by intrathymic selection events to generate a peripheral T cell pool of self-MH restricted, non-autoaggressive T cells. Post-thymic interaction of alpha-beta TR with the pMH complexes shapes TR structural and functional avidity (PubMed:15040585).</text>
</comment>
<comment type="subunit">
    <text evidence="4">Alpha-beta TR is a heterodimer composed of an alpha and beta chain; disulfide-linked. The alpha-beta TR is associated with the transmembrane signaling CD3 coreceptor proteins to form the TR-CD3 (TcR or TCR). The assembly of alpha-beta TR heterodimers with CD3 occurs in the endoplasmic reticulum where a single alpha-beta TR heterodimer associates with one CD3D-CD3E heterodimer, one CD3G-CD3E heterodimer and one CD247 homodimer forming a stable octameric structure. CD3D-CD3E and CD3G-CD3E heterodimers preferentially associate with TR alpha and TR beta chains, respectively. The association of the CD247 homodimer is the last step of TcR assembly in the endoplasmic reticulum and is required for transport to the cell surface.</text>
</comment>
<comment type="subcellular location">
    <subcellularLocation>
        <location evidence="4">Cell membrane</location>
    </subcellularLocation>
</comment>
<comment type="polymorphism">
    <text evidence="9">There are several alleles. The sequence shown is that of IMGT allele TRBV9*02.</text>
</comment>